<evidence type="ECO:0000255" key="1">
    <source>
        <dbReference type="HAMAP-Rule" id="MF_01961"/>
    </source>
</evidence>
<evidence type="ECO:0000256" key="2">
    <source>
        <dbReference type="SAM" id="MobiDB-lite"/>
    </source>
</evidence>
<organism>
    <name type="scientific">Stutzerimonas stutzeri (strain A1501)</name>
    <name type="common">Pseudomonas stutzeri</name>
    <dbReference type="NCBI Taxonomy" id="379731"/>
    <lineage>
        <taxon>Bacteria</taxon>
        <taxon>Pseudomonadati</taxon>
        <taxon>Pseudomonadota</taxon>
        <taxon>Gammaproteobacteria</taxon>
        <taxon>Pseudomonadales</taxon>
        <taxon>Pseudomonadaceae</taxon>
        <taxon>Stutzerimonas</taxon>
    </lineage>
</organism>
<comment type="function">
    <text evidence="1">Bifunctional enzyme with both catalase and broad-spectrum peroxidase activity.</text>
</comment>
<comment type="catalytic activity">
    <reaction evidence="1">
        <text>H2O2 + AH2 = A + 2 H2O</text>
        <dbReference type="Rhea" id="RHEA:30275"/>
        <dbReference type="ChEBI" id="CHEBI:13193"/>
        <dbReference type="ChEBI" id="CHEBI:15377"/>
        <dbReference type="ChEBI" id="CHEBI:16240"/>
        <dbReference type="ChEBI" id="CHEBI:17499"/>
        <dbReference type="EC" id="1.11.1.21"/>
    </reaction>
</comment>
<comment type="catalytic activity">
    <reaction evidence="1">
        <text>2 H2O2 = O2 + 2 H2O</text>
        <dbReference type="Rhea" id="RHEA:20309"/>
        <dbReference type="ChEBI" id="CHEBI:15377"/>
        <dbReference type="ChEBI" id="CHEBI:15379"/>
        <dbReference type="ChEBI" id="CHEBI:16240"/>
        <dbReference type="EC" id="1.11.1.21"/>
    </reaction>
</comment>
<comment type="cofactor">
    <cofactor evidence="1">
        <name>heme b</name>
        <dbReference type="ChEBI" id="CHEBI:60344"/>
    </cofactor>
    <text evidence="1">Binds 1 heme b (iron(II)-protoporphyrin IX) group per dimer.</text>
</comment>
<comment type="subunit">
    <text evidence="1">Homodimer or homotetramer.</text>
</comment>
<comment type="PTM">
    <text evidence="1">Formation of the three residue Trp-Tyr-Met cross-link is important for the catalase, but not the peroxidase activity of the enzyme.</text>
</comment>
<comment type="similarity">
    <text evidence="1">Belongs to the peroxidase family. Peroxidase/catalase subfamily.</text>
</comment>
<reference key="1">
    <citation type="journal article" date="2008" name="Proc. Natl. Acad. Sci. U.S.A.">
        <title>Nitrogen fixation island and rhizosphere competence traits in the genome of root-associated Pseudomonas stutzeri A1501.</title>
        <authorList>
            <person name="Yan Y."/>
            <person name="Yang J."/>
            <person name="Dou Y."/>
            <person name="Chen M."/>
            <person name="Ping S."/>
            <person name="Peng J."/>
            <person name="Lu W."/>
            <person name="Zhang W."/>
            <person name="Yao Z."/>
            <person name="Li H."/>
            <person name="Liu W."/>
            <person name="He S."/>
            <person name="Geng L."/>
            <person name="Zhang X."/>
            <person name="Yang F."/>
            <person name="Yu H."/>
            <person name="Zhan Y."/>
            <person name="Li D."/>
            <person name="Lin Z."/>
            <person name="Wang Y."/>
            <person name="Elmerich C."/>
            <person name="Lin M."/>
            <person name="Jin Q."/>
        </authorList>
    </citation>
    <scope>NUCLEOTIDE SEQUENCE [LARGE SCALE GENOMIC DNA]</scope>
    <source>
        <strain>A1501</strain>
    </source>
</reference>
<name>KATG_STUS1</name>
<protein>
    <recommendedName>
        <fullName evidence="1">Catalase-peroxidase</fullName>
        <shortName evidence="1">CP</shortName>
        <ecNumber evidence="1">1.11.1.21</ecNumber>
    </recommendedName>
    <alternativeName>
        <fullName evidence="1">Peroxidase/catalase</fullName>
    </alternativeName>
</protein>
<gene>
    <name evidence="1" type="primary">katG</name>
    <name type="ordered locus">PST_1629</name>
</gene>
<proteinExistence type="inferred from homology"/>
<sequence length="743" mass="81903">MNAESGENAGGGCPLGHGAGAPRKRPSNRDWWPEALSLTSLNQHSPRSNPYGGDFDYAAEFNSLDLDAVIADLHKVMTDSQDWWPADFGHYGGLFIRMAWHSAGTYRITDGRGGAGGGQQRFAPLNSWPDNASLDKARRLLWPIKQKYGRKLSWADLFVLTGNVALESMGFKTFGFGGGRADTWEPEELFWGPEGTWLGDERYSGERQLHPGLGAVQMGLIYVNPEGPNGNPDPKAAAVDIRETFARMAMNDYETVALIAGGHTFGKTHGAGDPSFIGPEPEGALIEDQGLGWRSKFQTGIGPDAITSGLEVIWSQTPVKWSNYFFENLFNFEWELTKSPAGAHQWVAKDAPEIIPDPFDPNKKRKPTMLTTDLSLRFDPIYEPISRHFLENPDEFADAFARAWFKLTHRDMGPIARYLGPLVPKEQLIWQDPIPERDHPVIDDADIASLKQKILGLGFSVSDLVSVAWASAATYRGSDKRGGANGARIRFAPQKDWEINNPPLLAQVLQKLGEIQSDFNGSATGGKKVSMADLIVLAGCAAIEKAAQDGGVNVAVPFTPGRMDALEEWTDAQSFEALRPVADGFRNYYHESHFMAPEEALVDKAHLLRLSAPEMTVLVGGMRVLGANAGGSQDGVFTHRVGVLSNDFFVNLLDMKNEWTATEHKNRFQGLDRKTRQPTWTATRVDLIFGSQSELRAQAEVYGMADGNEKFVRDFAKAWDKVMNADRMDIGKPADQFSQKLSA</sequence>
<accession>A4VK13</accession>
<feature type="chain" id="PRO_0000354870" description="Catalase-peroxidase">
    <location>
        <begin position="1"/>
        <end position="743"/>
    </location>
</feature>
<feature type="region of interest" description="Disordered" evidence="2">
    <location>
        <begin position="1"/>
        <end position="29"/>
    </location>
</feature>
<feature type="compositionally biased region" description="Gly residues" evidence="2">
    <location>
        <begin position="8"/>
        <end position="19"/>
    </location>
</feature>
<feature type="active site" description="Proton acceptor" evidence="1">
    <location>
        <position position="101"/>
    </location>
</feature>
<feature type="binding site" description="axial binding residue" evidence="1">
    <location>
        <position position="263"/>
    </location>
    <ligand>
        <name>heme b</name>
        <dbReference type="ChEBI" id="CHEBI:60344"/>
    </ligand>
    <ligandPart>
        <name>Fe</name>
        <dbReference type="ChEBI" id="CHEBI:18248"/>
    </ligandPart>
</feature>
<feature type="site" description="Transition state stabilizer" evidence="1">
    <location>
        <position position="97"/>
    </location>
</feature>
<feature type="cross-link" description="Tryptophyl-tyrosyl-methioninium (Trp-Tyr) (with M-248)" evidence="1">
    <location>
        <begin position="100"/>
        <end position="222"/>
    </location>
</feature>
<feature type="cross-link" description="Tryptophyl-tyrosyl-methioninium (Tyr-Met) (with W-100)" evidence="1">
    <location>
        <begin position="222"/>
        <end position="248"/>
    </location>
</feature>
<dbReference type="EC" id="1.11.1.21" evidence="1"/>
<dbReference type="EMBL" id="CP000304">
    <property type="protein sequence ID" value="ABP79314.1"/>
    <property type="molecule type" value="Genomic_DNA"/>
</dbReference>
<dbReference type="RefSeq" id="WP_011912791.1">
    <property type="nucleotide sequence ID" value="NC_009434.1"/>
</dbReference>
<dbReference type="SMR" id="A4VK13"/>
<dbReference type="KEGG" id="psa:PST_1629"/>
<dbReference type="eggNOG" id="COG0376">
    <property type="taxonomic scope" value="Bacteria"/>
</dbReference>
<dbReference type="HOGENOM" id="CLU_025424_2_0_6"/>
<dbReference type="Proteomes" id="UP000000233">
    <property type="component" value="Chromosome"/>
</dbReference>
<dbReference type="GO" id="GO:0005829">
    <property type="term" value="C:cytosol"/>
    <property type="evidence" value="ECO:0007669"/>
    <property type="project" value="TreeGrafter"/>
</dbReference>
<dbReference type="GO" id="GO:0004096">
    <property type="term" value="F:catalase activity"/>
    <property type="evidence" value="ECO:0007669"/>
    <property type="project" value="UniProtKB-UniRule"/>
</dbReference>
<dbReference type="GO" id="GO:0020037">
    <property type="term" value="F:heme binding"/>
    <property type="evidence" value="ECO:0007669"/>
    <property type="project" value="InterPro"/>
</dbReference>
<dbReference type="GO" id="GO:0046872">
    <property type="term" value="F:metal ion binding"/>
    <property type="evidence" value="ECO:0007669"/>
    <property type="project" value="UniProtKB-KW"/>
</dbReference>
<dbReference type="GO" id="GO:0070301">
    <property type="term" value="P:cellular response to hydrogen peroxide"/>
    <property type="evidence" value="ECO:0007669"/>
    <property type="project" value="TreeGrafter"/>
</dbReference>
<dbReference type="GO" id="GO:0042744">
    <property type="term" value="P:hydrogen peroxide catabolic process"/>
    <property type="evidence" value="ECO:0007669"/>
    <property type="project" value="UniProtKB-KW"/>
</dbReference>
<dbReference type="CDD" id="cd00649">
    <property type="entry name" value="catalase_peroxidase_1"/>
    <property type="match status" value="1"/>
</dbReference>
<dbReference type="CDD" id="cd08200">
    <property type="entry name" value="catalase_peroxidase_2"/>
    <property type="match status" value="1"/>
</dbReference>
<dbReference type="FunFam" id="1.10.420.10:FF:000002">
    <property type="entry name" value="Catalase-peroxidase"/>
    <property type="match status" value="1"/>
</dbReference>
<dbReference type="FunFam" id="1.10.420.10:FF:000004">
    <property type="entry name" value="Catalase-peroxidase"/>
    <property type="match status" value="1"/>
</dbReference>
<dbReference type="FunFam" id="1.10.520.10:FF:000002">
    <property type="entry name" value="Catalase-peroxidase"/>
    <property type="match status" value="1"/>
</dbReference>
<dbReference type="Gene3D" id="1.10.520.10">
    <property type="match status" value="2"/>
</dbReference>
<dbReference type="Gene3D" id="1.10.420.10">
    <property type="entry name" value="Peroxidase, domain 2"/>
    <property type="match status" value="2"/>
</dbReference>
<dbReference type="HAMAP" id="MF_01961">
    <property type="entry name" value="Catal_peroxid"/>
    <property type="match status" value="1"/>
</dbReference>
<dbReference type="InterPro" id="IPR000763">
    <property type="entry name" value="Catalase_peroxidase"/>
</dbReference>
<dbReference type="InterPro" id="IPR002016">
    <property type="entry name" value="Haem_peroxidase"/>
</dbReference>
<dbReference type="InterPro" id="IPR010255">
    <property type="entry name" value="Haem_peroxidase_sf"/>
</dbReference>
<dbReference type="InterPro" id="IPR019794">
    <property type="entry name" value="Peroxidases_AS"/>
</dbReference>
<dbReference type="InterPro" id="IPR019793">
    <property type="entry name" value="Peroxidases_heam-ligand_BS"/>
</dbReference>
<dbReference type="NCBIfam" id="TIGR00198">
    <property type="entry name" value="cat_per_HPI"/>
    <property type="match status" value="1"/>
</dbReference>
<dbReference type="NCBIfam" id="NF011635">
    <property type="entry name" value="PRK15061.1"/>
    <property type="match status" value="1"/>
</dbReference>
<dbReference type="PANTHER" id="PTHR30555:SF0">
    <property type="entry name" value="CATALASE-PEROXIDASE"/>
    <property type="match status" value="1"/>
</dbReference>
<dbReference type="PANTHER" id="PTHR30555">
    <property type="entry name" value="HYDROPEROXIDASE I, BIFUNCTIONAL CATALASE-PEROXIDASE"/>
    <property type="match status" value="1"/>
</dbReference>
<dbReference type="Pfam" id="PF00141">
    <property type="entry name" value="peroxidase"/>
    <property type="match status" value="2"/>
</dbReference>
<dbReference type="PRINTS" id="PR00460">
    <property type="entry name" value="BPEROXIDASE"/>
</dbReference>
<dbReference type="PRINTS" id="PR00458">
    <property type="entry name" value="PEROXIDASE"/>
</dbReference>
<dbReference type="SUPFAM" id="SSF48113">
    <property type="entry name" value="Heme-dependent peroxidases"/>
    <property type="match status" value="2"/>
</dbReference>
<dbReference type="PROSITE" id="PS00435">
    <property type="entry name" value="PEROXIDASE_1"/>
    <property type="match status" value="1"/>
</dbReference>
<dbReference type="PROSITE" id="PS00436">
    <property type="entry name" value="PEROXIDASE_2"/>
    <property type="match status" value="1"/>
</dbReference>
<dbReference type="PROSITE" id="PS50873">
    <property type="entry name" value="PEROXIDASE_4"/>
    <property type="match status" value="1"/>
</dbReference>
<keyword id="KW-0349">Heme</keyword>
<keyword id="KW-0376">Hydrogen peroxide</keyword>
<keyword id="KW-0408">Iron</keyword>
<keyword id="KW-0479">Metal-binding</keyword>
<keyword id="KW-0560">Oxidoreductase</keyword>
<keyword id="KW-0575">Peroxidase</keyword>
<keyword id="KW-1185">Reference proteome</keyword>